<keyword id="KW-0240">DNA-directed RNA polymerase</keyword>
<keyword id="KW-0548">Nucleotidyltransferase</keyword>
<keyword id="KW-1185">Reference proteome</keyword>
<keyword id="KW-0804">Transcription</keyword>
<keyword id="KW-0808">Transferase</keyword>
<protein>
    <recommendedName>
        <fullName evidence="1">DNA-directed RNA polymerase subunit beta</fullName>
        <shortName evidence="1">RNAP subunit beta</shortName>
        <ecNumber evidence="1">2.7.7.6</ecNumber>
    </recommendedName>
    <alternativeName>
        <fullName evidence="1">RNA polymerase subunit beta</fullName>
    </alternativeName>
    <alternativeName>
        <fullName evidence="1">Transcriptase subunit beta</fullName>
    </alternativeName>
</protein>
<evidence type="ECO:0000255" key="1">
    <source>
        <dbReference type="HAMAP-Rule" id="MF_01321"/>
    </source>
</evidence>
<evidence type="ECO:0000256" key="2">
    <source>
        <dbReference type="SAM" id="MobiDB-lite"/>
    </source>
</evidence>
<feature type="chain" id="PRO_1000141720" description="DNA-directed RNA polymerase subunit beta">
    <location>
        <begin position="1"/>
        <end position="1096"/>
    </location>
</feature>
<feature type="region of interest" description="Disordered" evidence="2">
    <location>
        <begin position="1070"/>
        <end position="1096"/>
    </location>
</feature>
<dbReference type="EC" id="2.7.7.6" evidence="1"/>
<dbReference type="EMBL" id="CP000878">
    <property type="protein sequence ID" value="ABX09538.1"/>
    <property type="molecule type" value="Genomic_DNA"/>
</dbReference>
<dbReference type="RefSeq" id="WP_012196159.1">
    <property type="nucleotide sequence ID" value="NC_009976.1"/>
</dbReference>
<dbReference type="SMR" id="A9BCH6"/>
<dbReference type="STRING" id="93059.P9211_16071"/>
<dbReference type="KEGG" id="pmj:P9211_16071"/>
<dbReference type="eggNOG" id="COG0085">
    <property type="taxonomic scope" value="Bacteria"/>
</dbReference>
<dbReference type="HOGENOM" id="CLU_000524_4_1_3"/>
<dbReference type="OrthoDB" id="9803954at2"/>
<dbReference type="Proteomes" id="UP000000788">
    <property type="component" value="Chromosome"/>
</dbReference>
<dbReference type="GO" id="GO:0000428">
    <property type="term" value="C:DNA-directed RNA polymerase complex"/>
    <property type="evidence" value="ECO:0007669"/>
    <property type="project" value="UniProtKB-KW"/>
</dbReference>
<dbReference type="GO" id="GO:0003677">
    <property type="term" value="F:DNA binding"/>
    <property type="evidence" value="ECO:0007669"/>
    <property type="project" value="UniProtKB-UniRule"/>
</dbReference>
<dbReference type="GO" id="GO:0003899">
    <property type="term" value="F:DNA-directed RNA polymerase activity"/>
    <property type="evidence" value="ECO:0007669"/>
    <property type="project" value="UniProtKB-UniRule"/>
</dbReference>
<dbReference type="GO" id="GO:0032549">
    <property type="term" value="F:ribonucleoside binding"/>
    <property type="evidence" value="ECO:0007669"/>
    <property type="project" value="InterPro"/>
</dbReference>
<dbReference type="GO" id="GO:0006351">
    <property type="term" value="P:DNA-templated transcription"/>
    <property type="evidence" value="ECO:0007669"/>
    <property type="project" value="UniProtKB-UniRule"/>
</dbReference>
<dbReference type="CDD" id="cd00653">
    <property type="entry name" value="RNA_pol_B_RPB2"/>
    <property type="match status" value="1"/>
</dbReference>
<dbReference type="FunFam" id="3.90.1800.10:FF:000001">
    <property type="entry name" value="DNA-directed RNA polymerase subunit beta"/>
    <property type="match status" value="1"/>
</dbReference>
<dbReference type="Gene3D" id="2.40.50.100">
    <property type="match status" value="1"/>
</dbReference>
<dbReference type="Gene3D" id="2.40.50.150">
    <property type="match status" value="1"/>
</dbReference>
<dbReference type="Gene3D" id="3.90.1100.10">
    <property type="match status" value="1"/>
</dbReference>
<dbReference type="Gene3D" id="2.30.150.10">
    <property type="entry name" value="DNA-directed RNA polymerase, beta subunit, external 1 domain"/>
    <property type="match status" value="1"/>
</dbReference>
<dbReference type="Gene3D" id="2.40.270.10">
    <property type="entry name" value="DNA-directed RNA polymerase, subunit 2, domain 6"/>
    <property type="match status" value="1"/>
</dbReference>
<dbReference type="Gene3D" id="3.90.1800.10">
    <property type="entry name" value="RNA polymerase alpha subunit dimerisation domain"/>
    <property type="match status" value="1"/>
</dbReference>
<dbReference type="Gene3D" id="3.90.1110.10">
    <property type="entry name" value="RNA polymerase Rpb2, domain 2"/>
    <property type="match status" value="1"/>
</dbReference>
<dbReference type="HAMAP" id="MF_01321">
    <property type="entry name" value="RNApol_bact_RpoB"/>
    <property type="match status" value="1"/>
</dbReference>
<dbReference type="InterPro" id="IPR042107">
    <property type="entry name" value="DNA-dir_RNA_pol_bsu_ext_1_sf"/>
</dbReference>
<dbReference type="InterPro" id="IPR019462">
    <property type="entry name" value="DNA-dir_RNA_pol_bsu_external_1"/>
</dbReference>
<dbReference type="InterPro" id="IPR015712">
    <property type="entry name" value="DNA-dir_RNA_pol_su2"/>
</dbReference>
<dbReference type="InterPro" id="IPR007120">
    <property type="entry name" value="DNA-dir_RNAP_su2_dom"/>
</dbReference>
<dbReference type="InterPro" id="IPR037033">
    <property type="entry name" value="DNA-dir_RNAP_su2_hyb_sf"/>
</dbReference>
<dbReference type="InterPro" id="IPR010243">
    <property type="entry name" value="RNA_pol_bsu_bac"/>
</dbReference>
<dbReference type="InterPro" id="IPR007121">
    <property type="entry name" value="RNA_pol_bsu_CS"/>
</dbReference>
<dbReference type="InterPro" id="IPR007644">
    <property type="entry name" value="RNA_pol_bsu_protrusion"/>
</dbReference>
<dbReference type="InterPro" id="IPR007642">
    <property type="entry name" value="RNA_pol_Rpb2_2"/>
</dbReference>
<dbReference type="InterPro" id="IPR037034">
    <property type="entry name" value="RNA_pol_Rpb2_2_sf"/>
</dbReference>
<dbReference type="InterPro" id="IPR007645">
    <property type="entry name" value="RNA_pol_Rpb2_3"/>
</dbReference>
<dbReference type="InterPro" id="IPR007641">
    <property type="entry name" value="RNA_pol_Rpb2_7"/>
</dbReference>
<dbReference type="InterPro" id="IPR014724">
    <property type="entry name" value="RNA_pol_RPB2_OB-fold"/>
</dbReference>
<dbReference type="NCBIfam" id="NF001616">
    <property type="entry name" value="PRK00405.1"/>
    <property type="match status" value="1"/>
</dbReference>
<dbReference type="NCBIfam" id="TIGR02013">
    <property type="entry name" value="rpoB"/>
    <property type="match status" value="1"/>
</dbReference>
<dbReference type="PANTHER" id="PTHR20856">
    <property type="entry name" value="DNA-DIRECTED RNA POLYMERASE I SUBUNIT 2"/>
    <property type="match status" value="1"/>
</dbReference>
<dbReference type="Pfam" id="PF04563">
    <property type="entry name" value="RNA_pol_Rpb2_1"/>
    <property type="match status" value="1"/>
</dbReference>
<dbReference type="Pfam" id="PF04561">
    <property type="entry name" value="RNA_pol_Rpb2_2"/>
    <property type="match status" value="1"/>
</dbReference>
<dbReference type="Pfam" id="PF04565">
    <property type="entry name" value="RNA_pol_Rpb2_3"/>
    <property type="match status" value="1"/>
</dbReference>
<dbReference type="Pfam" id="PF10385">
    <property type="entry name" value="RNA_pol_Rpb2_45"/>
    <property type="match status" value="1"/>
</dbReference>
<dbReference type="Pfam" id="PF00562">
    <property type="entry name" value="RNA_pol_Rpb2_6"/>
    <property type="match status" value="1"/>
</dbReference>
<dbReference type="Pfam" id="PF04560">
    <property type="entry name" value="RNA_pol_Rpb2_7"/>
    <property type="match status" value="1"/>
</dbReference>
<dbReference type="SUPFAM" id="SSF64484">
    <property type="entry name" value="beta and beta-prime subunits of DNA dependent RNA-polymerase"/>
    <property type="match status" value="1"/>
</dbReference>
<dbReference type="PROSITE" id="PS01166">
    <property type="entry name" value="RNA_POL_BETA"/>
    <property type="match status" value="1"/>
</dbReference>
<accession>A9BCH6</accession>
<gene>
    <name evidence="1" type="primary">rpoB</name>
    <name type="ordered locus">P9211_16071</name>
</gene>
<reference key="1">
    <citation type="journal article" date="2007" name="PLoS Genet.">
        <title>Patterns and implications of gene gain and loss in the evolution of Prochlorococcus.</title>
        <authorList>
            <person name="Kettler G.C."/>
            <person name="Martiny A.C."/>
            <person name="Huang K."/>
            <person name="Zucker J."/>
            <person name="Coleman M.L."/>
            <person name="Rodrigue S."/>
            <person name="Chen F."/>
            <person name="Lapidus A."/>
            <person name="Ferriera S."/>
            <person name="Johnson J."/>
            <person name="Steglich C."/>
            <person name="Church G.M."/>
            <person name="Richardson P."/>
            <person name="Chisholm S.W."/>
        </authorList>
    </citation>
    <scope>NUCLEOTIDE SEQUENCE [LARGE SCALE GENOMIC DNA]</scope>
    <source>
        <strain>MIT 9211</strain>
    </source>
</reference>
<proteinExistence type="inferred from homology"/>
<comment type="function">
    <text evidence="1">DNA-dependent RNA polymerase catalyzes the transcription of DNA into RNA using the four ribonucleoside triphosphates as substrates.</text>
</comment>
<comment type="catalytic activity">
    <reaction evidence="1">
        <text>RNA(n) + a ribonucleoside 5'-triphosphate = RNA(n+1) + diphosphate</text>
        <dbReference type="Rhea" id="RHEA:21248"/>
        <dbReference type="Rhea" id="RHEA-COMP:14527"/>
        <dbReference type="Rhea" id="RHEA-COMP:17342"/>
        <dbReference type="ChEBI" id="CHEBI:33019"/>
        <dbReference type="ChEBI" id="CHEBI:61557"/>
        <dbReference type="ChEBI" id="CHEBI:140395"/>
        <dbReference type="EC" id="2.7.7.6"/>
    </reaction>
</comment>
<comment type="subunit">
    <text evidence="1">In cyanobacteria the RNAP catalytic core is composed of 2 alpha, 1 beta, 1 beta', 1 gamma and 1 omega subunit. When a sigma factor is associated with the core the holoenzyme is formed, which can initiate transcription.</text>
</comment>
<comment type="similarity">
    <text evidence="1">Belongs to the RNA polymerase beta chain family.</text>
</comment>
<organism>
    <name type="scientific">Prochlorococcus marinus (strain MIT 9211)</name>
    <dbReference type="NCBI Taxonomy" id="93059"/>
    <lineage>
        <taxon>Bacteria</taxon>
        <taxon>Bacillati</taxon>
        <taxon>Cyanobacteriota</taxon>
        <taxon>Cyanophyceae</taxon>
        <taxon>Synechococcales</taxon>
        <taxon>Prochlorococcaceae</taxon>
        <taxon>Prochlorococcus</taxon>
    </lineage>
</organism>
<name>RPOB_PROM4</name>
<sequence length="1096" mass="122654">MSRSAIQVAKTATHLPDLVEVQRASFKWFLEKGLIEELENFSPITDYTGKLELHFIGSEYRLKRPRHDVEEAKKRDATFASQMYVTCRLINKETGEIKEQEVFIGELPLMTERGTFIINGAERVIVNQIVRSPGVYFKDEQDKNGRRTYNASVIPNRGAWLKFETDKNDLLHVRVDKTRKINAHVLMRAMGLSDNDVIDKLRHPEYYKKSIEAADEEGISSEDQALLELYKKLRPGEPPSVSGGQQLLQSRFFDPKRYDLGRVGRYKINKKLRLTIPDSVRTLTHEDVLSTIDYLINLELDVGGATLDDIDHLGNRRVRSVGELLQNQVRVGLNRLERIIKERMTVGETDSLTPAQLVNPKPLVAAVKEFFGSSQLSQFMDQTNPLAELTHKRRISALGPGGLTRERAGFAVRDIHPSHYGRLCPIETPEGPNAGLINSLATHARVNDYGFIETPFWKVDKGRVIKEGKPIYLSADLEDECRVAPGDVATDKEGMIVADLIPVRYRQDFEKVPPEQVDYVQLSPVQVISVATSLIPFLEHDDANRALMGSNMQRQAVPLLRPERPLVGTGLETQVARDSGMVPISQVNGTVTYVDANIIVVTDEEGSEHHHSLQKYQRSNQDTCLNQRPIVHNGDPVIIGQVLADGSACEGGEIALGQNVLIAYMPWEGYNYEDAILVSERLVKDDLYTSVHIEKYEIEARQTKLGPEEITREIPNIAEESLGNLDEMGIIRIGAFVESGDILVGKVTPKGESDQPPEEKLLRAIFGEKARDVRDNSLRVPSTERGRVVDVRIYTREQGDELPPGANMVVRVYVAQRRKIQVGDKMAGRHGNKGIISRILPREDMPYLPDGTPVDIVLNPLGVPSRMNVGQVFELLMGWAASNLDCRVKVVPFDEMYGAEKSYQTVTAYLKEAASLPGKEWVYNPEDPGKLLLRDGRTGEPFDQPVAVGYSHFLKLVHLVDDKIHARSTGPYSLVTQQPLGGKAQQGGQRLGEMEVWALEAYGAAYTLQELLTVKSDDMQGRNEALNAIVKGKPIPRPGTPESFKVLMRELQSLGLDIGVYTDEGKEVDLMQDVNPRRSTPSRPTYESLGSDYQED</sequence>